<organism>
    <name type="scientific">Cephalophula zebra</name>
    <name type="common">Zebra duiker</name>
    <name type="synonym">Cephalophus zebra</name>
    <dbReference type="NCBI Taxonomy" id="129233"/>
    <lineage>
        <taxon>Eukaryota</taxon>
        <taxon>Metazoa</taxon>
        <taxon>Chordata</taxon>
        <taxon>Craniata</taxon>
        <taxon>Vertebrata</taxon>
        <taxon>Euteleostomi</taxon>
        <taxon>Mammalia</taxon>
        <taxon>Eutheria</taxon>
        <taxon>Laurasiatheria</taxon>
        <taxon>Artiodactyla</taxon>
        <taxon>Ruminantia</taxon>
        <taxon>Pecora</taxon>
        <taxon>Bovidae</taxon>
        <taxon>Cephalophinae</taxon>
        <taxon>Cephalophula</taxon>
    </lineage>
</organism>
<gene>
    <name type="primary">MT-CYB</name>
    <name type="synonym">COB</name>
    <name type="synonym">CYTB</name>
    <name type="synonym">MTCYB</name>
</gene>
<protein>
    <recommendedName>
        <fullName>Cytochrome b</fullName>
    </recommendedName>
    <alternativeName>
        <fullName>Complex III subunit 3</fullName>
    </alternativeName>
    <alternativeName>
        <fullName>Complex III subunit III</fullName>
    </alternativeName>
    <alternativeName>
        <fullName>Cytochrome b-c1 complex subunit 3</fullName>
    </alternativeName>
    <alternativeName>
        <fullName>Ubiquinol-cytochrome-c reductase complex cytochrome b subunit</fullName>
    </alternativeName>
</protein>
<dbReference type="EMBL" id="AF153903">
    <property type="protein sequence ID" value="AAK26691.1"/>
    <property type="molecule type" value="Genomic_DNA"/>
</dbReference>
<dbReference type="SMR" id="Q9B5Q3"/>
<dbReference type="GO" id="GO:0005743">
    <property type="term" value="C:mitochondrial inner membrane"/>
    <property type="evidence" value="ECO:0007669"/>
    <property type="project" value="UniProtKB-SubCell"/>
</dbReference>
<dbReference type="GO" id="GO:0045275">
    <property type="term" value="C:respiratory chain complex III"/>
    <property type="evidence" value="ECO:0007669"/>
    <property type="project" value="InterPro"/>
</dbReference>
<dbReference type="GO" id="GO:0046872">
    <property type="term" value="F:metal ion binding"/>
    <property type="evidence" value="ECO:0007669"/>
    <property type="project" value="UniProtKB-KW"/>
</dbReference>
<dbReference type="GO" id="GO:0008121">
    <property type="term" value="F:ubiquinol-cytochrome-c reductase activity"/>
    <property type="evidence" value="ECO:0007669"/>
    <property type="project" value="InterPro"/>
</dbReference>
<dbReference type="GO" id="GO:0006122">
    <property type="term" value="P:mitochondrial electron transport, ubiquinol to cytochrome c"/>
    <property type="evidence" value="ECO:0007669"/>
    <property type="project" value="TreeGrafter"/>
</dbReference>
<dbReference type="CDD" id="cd00290">
    <property type="entry name" value="cytochrome_b_C"/>
    <property type="match status" value="1"/>
</dbReference>
<dbReference type="CDD" id="cd00284">
    <property type="entry name" value="Cytochrome_b_N"/>
    <property type="match status" value="1"/>
</dbReference>
<dbReference type="FunFam" id="1.20.810.10:FF:000002">
    <property type="entry name" value="Cytochrome b"/>
    <property type="match status" value="1"/>
</dbReference>
<dbReference type="Gene3D" id="1.20.810.10">
    <property type="entry name" value="Cytochrome Bc1 Complex, Chain C"/>
    <property type="match status" value="1"/>
</dbReference>
<dbReference type="InterPro" id="IPR005798">
    <property type="entry name" value="Cyt_b/b6_C"/>
</dbReference>
<dbReference type="InterPro" id="IPR036150">
    <property type="entry name" value="Cyt_b/b6_C_sf"/>
</dbReference>
<dbReference type="InterPro" id="IPR005797">
    <property type="entry name" value="Cyt_b/b6_N"/>
</dbReference>
<dbReference type="InterPro" id="IPR027387">
    <property type="entry name" value="Cytb/b6-like_sf"/>
</dbReference>
<dbReference type="InterPro" id="IPR030689">
    <property type="entry name" value="Cytochrome_b"/>
</dbReference>
<dbReference type="InterPro" id="IPR048260">
    <property type="entry name" value="Cytochrome_b_C_euk/bac"/>
</dbReference>
<dbReference type="InterPro" id="IPR048259">
    <property type="entry name" value="Cytochrome_b_N_euk/bac"/>
</dbReference>
<dbReference type="InterPro" id="IPR016174">
    <property type="entry name" value="Di-haem_cyt_TM"/>
</dbReference>
<dbReference type="PANTHER" id="PTHR19271">
    <property type="entry name" value="CYTOCHROME B"/>
    <property type="match status" value="1"/>
</dbReference>
<dbReference type="PANTHER" id="PTHR19271:SF16">
    <property type="entry name" value="CYTOCHROME B"/>
    <property type="match status" value="1"/>
</dbReference>
<dbReference type="Pfam" id="PF00032">
    <property type="entry name" value="Cytochrom_B_C"/>
    <property type="match status" value="1"/>
</dbReference>
<dbReference type="Pfam" id="PF00033">
    <property type="entry name" value="Cytochrome_B"/>
    <property type="match status" value="1"/>
</dbReference>
<dbReference type="PIRSF" id="PIRSF038885">
    <property type="entry name" value="COB"/>
    <property type="match status" value="1"/>
</dbReference>
<dbReference type="SUPFAM" id="SSF81648">
    <property type="entry name" value="a domain/subunit of cytochrome bc1 complex (Ubiquinol-cytochrome c reductase)"/>
    <property type="match status" value="1"/>
</dbReference>
<dbReference type="SUPFAM" id="SSF81342">
    <property type="entry name" value="Transmembrane di-heme cytochromes"/>
    <property type="match status" value="1"/>
</dbReference>
<dbReference type="PROSITE" id="PS51003">
    <property type="entry name" value="CYTB_CTER"/>
    <property type="match status" value="1"/>
</dbReference>
<dbReference type="PROSITE" id="PS51002">
    <property type="entry name" value="CYTB_NTER"/>
    <property type="match status" value="1"/>
</dbReference>
<proteinExistence type="inferred from homology"/>
<feature type="chain" id="PRO_0000254676" description="Cytochrome b">
    <location>
        <begin position="1"/>
        <end position="379"/>
    </location>
</feature>
<feature type="transmembrane region" description="Helical" evidence="2">
    <location>
        <begin position="33"/>
        <end position="53"/>
    </location>
</feature>
<feature type="transmembrane region" description="Helical" evidence="2">
    <location>
        <begin position="77"/>
        <end position="98"/>
    </location>
</feature>
<feature type="transmembrane region" description="Helical" evidence="2">
    <location>
        <begin position="113"/>
        <end position="133"/>
    </location>
</feature>
<feature type="transmembrane region" description="Helical" evidence="2">
    <location>
        <begin position="178"/>
        <end position="198"/>
    </location>
</feature>
<feature type="transmembrane region" description="Helical" evidence="2">
    <location>
        <begin position="226"/>
        <end position="246"/>
    </location>
</feature>
<feature type="transmembrane region" description="Helical" evidence="2">
    <location>
        <begin position="288"/>
        <end position="308"/>
    </location>
</feature>
<feature type="transmembrane region" description="Helical" evidence="2">
    <location>
        <begin position="320"/>
        <end position="340"/>
    </location>
</feature>
<feature type="transmembrane region" description="Helical" evidence="2">
    <location>
        <begin position="347"/>
        <end position="367"/>
    </location>
</feature>
<feature type="binding site" description="axial binding residue" evidence="2">
    <location>
        <position position="83"/>
    </location>
    <ligand>
        <name>heme b</name>
        <dbReference type="ChEBI" id="CHEBI:60344"/>
        <label>b562</label>
    </ligand>
    <ligandPart>
        <name>Fe</name>
        <dbReference type="ChEBI" id="CHEBI:18248"/>
    </ligandPart>
</feature>
<feature type="binding site" description="axial binding residue" evidence="2">
    <location>
        <position position="97"/>
    </location>
    <ligand>
        <name>heme b</name>
        <dbReference type="ChEBI" id="CHEBI:60344"/>
        <label>b566</label>
    </ligand>
    <ligandPart>
        <name>Fe</name>
        <dbReference type="ChEBI" id="CHEBI:18248"/>
    </ligandPart>
</feature>
<feature type="binding site" description="axial binding residue" evidence="2">
    <location>
        <position position="182"/>
    </location>
    <ligand>
        <name>heme b</name>
        <dbReference type="ChEBI" id="CHEBI:60344"/>
        <label>b562</label>
    </ligand>
    <ligandPart>
        <name>Fe</name>
        <dbReference type="ChEBI" id="CHEBI:18248"/>
    </ligandPart>
</feature>
<feature type="binding site" description="axial binding residue" evidence="2">
    <location>
        <position position="196"/>
    </location>
    <ligand>
        <name>heme b</name>
        <dbReference type="ChEBI" id="CHEBI:60344"/>
        <label>b566</label>
    </ligand>
    <ligandPart>
        <name>Fe</name>
        <dbReference type="ChEBI" id="CHEBI:18248"/>
    </ligandPart>
</feature>
<feature type="binding site" evidence="2">
    <location>
        <position position="201"/>
    </location>
    <ligand>
        <name>a ubiquinone</name>
        <dbReference type="ChEBI" id="CHEBI:16389"/>
    </ligand>
</feature>
<geneLocation type="mitochondrion"/>
<evidence type="ECO:0000250" key="1"/>
<evidence type="ECO:0000250" key="2">
    <source>
        <dbReference type="UniProtKB" id="P00157"/>
    </source>
</evidence>
<evidence type="ECO:0000255" key="3">
    <source>
        <dbReference type="PROSITE-ProRule" id="PRU00967"/>
    </source>
</evidence>
<evidence type="ECO:0000255" key="4">
    <source>
        <dbReference type="PROSITE-ProRule" id="PRU00968"/>
    </source>
</evidence>
<reference key="1">
    <citation type="journal article" date="2001" name="Mol. Phylogenet. Evol.">
        <title>Retrieval of four adaptive lineages in duiker antelope: evidence from mitochondrial DNA sequences and fluorescence in situ hybridization.</title>
        <authorList>
            <person name="van Vuuren B.J."/>
            <person name="Robinson T.J."/>
        </authorList>
    </citation>
    <scope>NUCLEOTIDE SEQUENCE [GENOMIC DNA]</scope>
</reference>
<accession>Q9B5Q3</accession>
<name>CYB_CEPZE</name>
<comment type="function">
    <text evidence="2">Component of the ubiquinol-cytochrome c reductase complex (complex III or cytochrome b-c1 complex) that is part of the mitochondrial respiratory chain. The b-c1 complex mediates electron transfer from ubiquinol to cytochrome c. Contributes to the generation of a proton gradient across the mitochondrial membrane that is then used for ATP synthesis.</text>
</comment>
<comment type="cofactor">
    <cofactor evidence="2">
        <name>heme b</name>
        <dbReference type="ChEBI" id="CHEBI:60344"/>
    </cofactor>
    <text evidence="2">Binds 2 heme b groups non-covalently.</text>
</comment>
<comment type="subunit">
    <text evidence="2">The cytochrome bc1 complex contains 11 subunits: 3 respiratory subunits (MT-CYB, CYC1 and UQCRFS1), 2 core proteins (UQCRC1 and UQCRC2) and 6 low-molecular weight proteins (UQCRH/QCR6, UQCRB/QCR7, UQCRQ/QCR8, UQCR10/QCR9, UQCR11/QCR10 and a cleavage product of UQCRFS1). This cytochrome bc1 complex then forms a dimer.</text>
</comment>
<comment type="subcellular location">
    <subcellularLocation>
        <location evidence="2">Mitochondrion inner membrane</location>
        <topology evidence="2">Multi-pass membrane protein</topology>
    </subcellularLocation>
</comment>
<comment type="miscellaneous">
    <text evidence="1">Heme 1 (or BL or b562) is low-potential and absorbs at about 562 nm, and heme 2 (or BH or b566) is high-potential and absorbs at about 566 nm.</text>
</comment>
<comment type="similarity">
    <text evidence="3 4">Belongs to the cytochrome b family.</text>
</comment>
<comment type="caution">
    <text evidence="2">The full-length protein contains only eight transmembrane helices, not nine as predicted by bioinformatics tools.</text>
</comment>
<keyword id="KW-0249">Electron transport</keyword>
<keyword id="KW-0349">Heme</keyword>
<keyword id="KW-0408">Iron</keyword>
<keyword id="KW-0472">Membrane</keyword>
<keyword id="KW-0479">Metal-binding</keyword>
<keyword id="KW-0496">Mitochondrion</keyword>
<keyword id="KW-0999">Mitochondrion inner membrane</keyword>
<keyword id="KW-0679">Respiratory chain</keyword>
<keyword id="KW-0812">Transmembrane</keyword>
<keyword id="KW-1133">Transmembrane helix</keyword>
<keyword id="KW-0813">Transport</keyword>
<keyword id="KW-0830">Ubiquinone</keyword>
<sequence length="379" mass="42672">MTNIRKTHPLLKIVNNAFIDLPAPSNISSWWNFGSLLGICLILQILTGLFLAMHYTADTTTAFSSVTHICRDVNYGWIIRYMHANGASMFFICLFMHVGRGLYYGSYTYMETWNIGVILLFATMATAFMGYVLPWGQMSFWGATVITNLLSAIPYIGTNLVEWIWGGFSVDKATLTRFFAFHFIFPFIIAALAMVHLLFLHETGSNNPTGISSDADKIPFHPYYTIKDILGALLLILALMTLVLFSPDLLGDPDNYTPANPLSTPPHIKPEWYFLFAYAILRSIPNKLGGVLALVLSILILILMPLLHTSKQRSMMFRPISQCLFWILVADLLTLTWIGGQPVEHPYIIIGQLASIMYFLLILVLMPVASTIENNLLKW</sequence>